<feature type="chain" id="PRO_0000299208" description="Phosphoprotein">
    <location>
        <begin position="1"/>
        <end position="269"/>
    </location>
</feature>
<feature type="region of interest" description="Disordered" evidence="2">
    <location>
        <begin position="1"/>
        <end position="27"/>
    </location>
</feature>
<feature type="compositionally biased region" description="Basic residues" evidence="2">
    <location>
        <begin position="1"/>
        <end position="10"/>
    </location>
</feature>
<evidence type="ECO:0000250" key="1"/>
<evidence type="ECO:0000256" key="2">
    <source>
        <dbReference type="SAM" id="MobiDB-lite"/>
    </source>
</evidence>
<evidence type="ECO:0000305" key="3"/>
<comment type="function">
    <text evidence="1">Non catalytic polymerase cofactor and regulatory protein that plays a role in viral transcription and replication. Stabilizes the RNA polymerase L to the N-RNA template and binds the soluble protein N, preventing it from encapsidating non-genomic RNA (By similarity).</text>
</comment>
<comment type="subunit">
    <text evidence="1">Homotrimer when phosphorylated. This trimer is stabilized by binding to the L protein. Binds soluble protein N, and ribonucleocapsid (By similarity).</text>
</comment>
<comment type="subcellular location">
    <subcellularLocation>
        <location>Virion</location>
    </subcellularLocation>
    <subcellularLocation>
        <location evidence="1">Host cytoplasm</location>
    </subcellularLocation>
</comment>
<comment type="PTM">
    <text evidence="1">Phosphorylated by host kinases.</text>
</comment>
<comment type="similarity">
    <text evidence="3">Belongs to the nucleorhabdovirus protein P family.</text>
</comment>
<reference key="1">
    <citation type="journal article" date="2005" name="J. Virol. Methods">
        <title>Shotgun sequencing of the negative-sense RNA genome of the rhabdovirus Maize mosaic virus.</title>
        <authorList>
            <person name="Reed S.E."/>
            <person name="Tsai C.W."/>
            <person name="Willie K.J."/>
            <person name="Redinbaugh M.G."/>
            <person name="Hogenhout S.A."/>
        </authorList>
    </citation>
    <scope>NUCLEOTIDE SEQUENCE [GENOMIC RNA]</scope>
</reference>
<dbReference type="EMBL" id="AY618418">
    <property type="protein sequence ID" value="AAT66753.1"/>
    <property type="molecule type" value="Genomic_RNA"/>
</dbReference>
<dbReference type="RefSeq" id="YP_052851.1">
    <property type="nucleotide sequence ID" value="NC_005975.1"/>
</dbReference>
<dbReference type="GeneID" id="2886120"/>
<dbReference type="KEGG" id="vg:2886120"/>
<dbReference type="Proteomes" id="UP000008593">
    <property type="component" value="Segment"/>
</dbReference>
<dbReference type="GO" id="GO:0030430">
    <property type="term" value="C:host cell cytoplasm"/>
    <property type="evidence" value="ECO:0007669"/>
    <property type="project" value="UniProtKB-SubCell"/>
</dbReference>
<dbReference type="GO" id="GO:0044423">
    <property type="term" value="C:virion component"/>
    <property type="evidence" value="ECO:0007669"/>
    <property type="project" value="UniProtKB-KW"/>
</dbReference>
<sequence length="269" mass="30420">MNRYSRRSRHPNPPVPNQEEPERDPNHIDQDLADLAQPLVLKERHAVMAPTQPSLSDVINEERQAPITFGNPPEVMANARLSALGYDNLTEREKRILAVGVRCGEAAKDYHSLTTTKKWIEDELKSQMVALASSTRTLTEAASLHTTFAMLHSPSIKRKAEAMSHISQGEESIDISKLNKTGMEDIWVAMESESKEDAVDTYLRNILEVDPTQFYAIDGWGLYLDFIPTWHYIAAGKNSAQFKTSYADEIVEQRAAFERVLSKRPRVEI</sequence>
<name>PHOSP_MMVR</name>
<keyword id="KW-0143">Chaperone</keyword>
<keyword id="KW-1035">Host cytoplasm</keyword>
<keyword id="KW-0597">Phosphoprotein</keyword>
<keyword id="KW-1185">Reference proteome</keyword>
<keyword id="KW-0693">Viral RNA replication</keyword>
<keyword id="KW-0946">Virion</keyword>
<accession>Q6E0X0</accession>
<organismHost>
    <name type="scientific">Rottboellia</name>
    <dbReference type="NCBI Taxonomy" id="300124"/>
</organismHost>
<organismHost>
    <name type="scientific">Setaria</name>
    <dbReference type="NCBI Taxonomy" id="4554"/>
</organismHost>
<organismHost>
    <name type="scientific">Sorghum bicolor</name>
    <name type="common">Sorghum</name>
    <name type="synonym">Sorghum vulgare</name>
    <dbReference type="NCBI Taxonomy" id="4558"/>
</organismHost>
<organismHost>
    <name type="scientific">Zea mays</name>
    <name type="common">Maize</name>
    <dbReference type="NCBI Taxonomy" id="4577"/>
</organismHost>
<gene>
    <name type="primary">P</name>
</gene>
<protein>
    <recommendedName>
        <fullName>Phosphoprotein</fullName>
        <shortName>Protein P</shortName>
    </recommendedName>
    <alternativeName>
        <fullName>Protein M1</fullName>
    </alternativeName>
</protein>
<organism>
    <name type="scientific">Maize mosaic virus (isolate Maize/United States/Reed/2005)</name>
    <name type="common">MMV</name>
    <dbReference type="NCBI Taxonomy" id="928305"/>
    <lineage>
        <taxon>Viruses</taxon>
        <taxon>Riboviria</taxon>
        <taxon>Orthornavirae</taxon>
        <taxon>Negarnaviricota</taxon>
        <taxon>Haploviricotina</taxon>
        <taxon>Monjiviricetes</taxon>
        <taxon>Mononegavirales</taxon>
        <taxon>Rhabdoviridae</taxon>
        <taxon>Betarhabdovirinae</taxon>
        <taxon>Alphanucleorhabdovirus</taxon>
        <taxon>Alphanucleorhabdovirus maydis</taxon>
    </lineage>
</organism>
<proteinExistence type="inferred from homology"/>